<accession>O29492</accession>
<reference key="1">
    <citation type="journal article" date="1997" name="Nature">
        <title>The complete genome sequence of the hyperthermophilic, sulphate-reducing archaeon Archaeoglobus fulgidus.</title>
        <authorList>
            <person name="Klenk H.-P."/>
            <person name="Clayton R.A."/>
            <person name="Tomb J.-F."/>
            <person name="White O."/>
            <person name="Nelson K.E."/>
            <person name="Ketchum K.A."/>
            <person name="Dodson R.J."/>
            <person name="Gwinn M.L."/>
            <person name="Hickey E.K."/>
            <person name="Peterson J.D."/>
            <person name="Richardson D.L."/>
            <person name="Kerlavage A.R."/>
            <person name="Graham D.E."/>
            <person name="Kyrpides N.C."/>
            <person name="Fleischmann R.D."/>
            <person name="Quackenbush J."/>
            <person name="Lee N.H."/>
            <person name="Sutton G.G."/>
            <person name="Gill S.R."/>
            <person name="Kirkness E.F."/>
            <person name="Dougherty B.A."/>
            <person name="McKenney K."/>
            <person name="Adams M.D."/>
            <person name="Loftus B.J."/>
            <person name="Peterson S.N."/>
            <person name="Reich C.I."/>
            <person name="McNeil L.K."/>
            <person name="Badger J.H."/>
            <person name="Glodek A."/>
            <person name="Zhou L."/>
            <person name="Overbeek R."/>
            <person name="Gocayne J.D."/>
            <person name="Weidman J.F."/>
            <person name="McDonald L.A."/>
            <person name="Utterback T.R."/>
            <person name="Cotton M.D."/>
            <person name="Spriggs T."/>
            <person name="Artiach P."/>
            <person name="Kaine B.P."/>
            <person name="Sykes S.M."/>
            <person name="Sadow P.W."/>
            <person name="D'Andrea K.P."/>
            <person name="Bowman C."/>
            <person name="Fujii C."/>
            <person name="Garland S.A."/>
            <person name="Mason T.M."/>
            <person name="Olsen G.J."/>
            <person name="Fraser C.M."/>
            <person name="Smith H.O."/>
            <person name="Woese C.R."/>
            <person name="Venter J.C."/>
        </authorList>
    </citation>
    <scope>NUCLEOTIDE SEQUENCE [LARGE SCALE GENOMIC DNA]</scope>
    <source>
        <strain>ATCC 49558 / DSM 4304 / JCM 9628 / NBRC 100126 / VC-16</strain>
    </source>
</reference>
<dbReference type="EMBL" id="AE000782">
    <property type="protein sequence ID" value="AAB90471.1"/>
    <property type="molecule type" value="Genomic_DNA"/>
</dbReference>
<dbReference type="PIR" id="F69345">
    <property type="entry name" value="F69345"/>
</dbReference>
<dbReference type="RefSeq" id="WP_010878269.1">
    <property type="nucleotide sequence ID" value="NC_000917.1"/>
</dbReference>
<dbReference type="SMR" id="O29492"/>
<dbReference type="STRING" id="224325.AF_0766"/>
<dbReference type="PaxDb" id="224325-AF_0766"/>
<dbReference type="EnsemblBacteria" id="AAB90471">
    <property type="protein sequence ID" value="AAB90471"/>
    <property type="gene ID" value="AF_0766"/>
</dbReference>
<dbReference type="KEGG" id="afu:AF_0766"/>
<dbReference type="eggNOG" id="arCOG01950">
    <property type="taxonomic scope" value="Archaea"/>
</dbReference>
<dbReference type="HOGENOM" id="CLU_190191_0_0_2"/>
<dbReference type="OrthoDB" id="55506at2157"/>
<dbReference type="PhylomeDB" id="O29492"/>
<dbReference type="Proteomes" id="UP000002199">
    <property type="component" value="Chromosome"/>
</dbReference>
<dbReference type="GO" id="GO:1990904">
    <property type="term" value="C:ribonucleoprotein complex"/>
    <property type="evidence" value="ECO:0007669"/>
    <property type="project" value="UniProtKB-KW"/>
</dbReference>
<dbReference type="GO" id="GO:0005840">
    <property type="term" value="C:ribosome"/>
    <property type="evidence" value="ECO:0007669"/>
    <property type="project" value="UniProtKB-KW"/>
</dbReference>
<dbReference type="GO" id="GO:0019843">
    <property type="term" value="F:rRNA binding"/>
    <property type="evidence" value="ECO:0007669"/>
    <property type="project" value="UniProtKB-UniRule"/>
</dbReference>
<dbReference type="GO" id="GO:0003735">
    <property type="term" value="F:structural constituent of ribosome"/>
    <property type="evidence" value="ECO:0007669"/>
    <property type="project" value="InterPro"/>
</dbReference>
<dbReference type="GO" id="GO:0008270">
    <property type="term" value="F:zinc ion binding"/>
    <property type="evidence" value="ECO:0007669"/>
    <property type="project" value="UniProtKB-UniRule"/>
</dbReference>
<dbReference type="GO" id="GO:0006412">
    <property type="term" value="P:translation"/>
    <property type="evidence" value="ECO:0007669"/>
    <property type="project" value="UniProtKB-UniRule"/>
</dbReference>
<dbReference type="CDD" id="cd00472">
    <property type="entry name" value="Ribosomal_L24e_L24"/>
    <property type="match status" value="1"/>
</dbReference>
<dbReference type="FunFam" id="2.30.170.20:FF:000001">
    <property type="entry name" value="probable ribosome biogenesis protein RLP24"/>
    <property type="match status" value="1"/>
</dbReference>
<dbReference type="Gene3D" id="2.30.170.20">
    <property type="entry name" value="Ribosomal protein L24e"/>
    <property type="match status" value="1"/>
</dbReference>
<dbReference type="HAMAP" id="MF_00773">
    <property type="entry name" value="Ribosomal_eL24"/>
    <property type="match status" value="1"/>
</dbReference>
<dbReference type="InterPro" id="IPR038630">
    <property type="entry name" value="L24e/L24_sf"/>
</dbReference>
<dbReference type="InterPro" id="IPR056366">
    <property type="entry name" value="Ribosomal_eL24"/>
</dbReference>
<dbReference type="InterPro" id="IPR055345">
    <property type="entry name" value="Ribosomal_eL24-rel_arc"/>
</dbReference>
<dbReference type="InterPro" id="IPR000988">
    <property type="entry name" value="Ribosomal_eL24-rel_N"/>
</dbReference>
<dbReference type="InterPro" id="IPR023442">
    <property type="entry name" value="Ribosomal_eL24_CS"/>
</dbReference>
<dbReference type="InterPro" id="IPR011017">
    <property type="entry name" value="TRASH_dom"/>
</dbReference>
<dbReference type="NCBIfam" id="NF034186">
    <property type="entry name" value="PRK14891.1-1"/>
    <property type="match status" value="1"/>
</dbReference>
<dbReference type="PANTHER" id="PTHR10792">
    <property type="entry name" value="60S RIBOSOMAL PROTEIN L24"/>
    <property type="match status" value="1"/>
</dbReference>
<dbReference type="PANTHER" id="PTHR10792:SF1">
    <property type="entry name" value="RIBOSOMAL PROTEIN L24"/>
    <property type="match status" value="1"/>
</dbReference>
<dbReference type="Pfam" id="PF01246">
    <property type="entry name" value="Ribosomal_L24e"/>
    <property type="match status" value="1"/>
</dbReference>
<dbReference type="SMART" id="SM00746">
    <property type="entry name" value="TRASH"/>
    <property type="match status" value="1"/>
</dbReference>
<dbReference type="SUPFAM" id="SSF57716">
    <property type="entry name" value="Glucocorticoid receptor-like (DNA-binding domain)"/>
    <property type="match status" value="1"/>
</dbReference>
<dbReference type="PROSITE" id="PS01073">
    <property type="entry name" value="RIBOSOMAL_L24E"/>
    <property type="match status" value="1"/>
</dbReference>
<protein>
    <recommendedName>
        <fullName evidence="1">Large ribosomal subunit protein eL24</fullName>
    </recommendedName>
    <alternativeName>
        <fullName evidence="2">50S ribosomal protein L24e</fullName>
    </alternativeName>
</protein>
<comment type="function">
    <text evidence="1">Binds to the 23S rRNA.</text>
</comment>
<comment type="cofactor">
    <cofactor evidence="1">
        <name>Zn(2+)</name>
        <dbReference type="ChEBI" id="CHEBI:29105"/>
    </cofactor>
    <text evidence="1">Binds 1 zinc ion per subunit.</text>
</comment>
<comment type="subunit">
    <text evidence="1">Part of the 50S ribosomal subunit. Forms a cluster with proteins L3 and L14.</text>
</comment>
<comment type="similarity">
    <text evidence="1">Belongs to the eukaryotic ribosomal protein eL24 family.</text>
</comment>
<evidence type="ECO:0000255" key="1">
    <source>
        <dbReference type="HAMAP-Rule" id="MF_00773"/>
    </source>
</evidence>
<evidence type="ECO:0000305" key="2"/>
<organism>
    <name type="scientific">Archaeoglobus fulgidus (strain ATCC 49558 / DSM 4304 / JCM 9628 / NBRC 100126 / VC-16)</name>
    <dbReference type="NCBI Taxonomy" id="224325"/>
    <lineage>
        <taxon>Archaea</taxon>
        <taxon>Methanobacteriati</taxon>
        <taxon>Methanobacteriota</taxon>
        <taxon>Archaeoglobi</taxon>
        <taxon>Archaeoglobales</taxon>
        <taxon>Archaeoglobaceae</taxon>
        <taxon>Archaeoglobus</taxon>
    </lineage>
</organism>
<feature type="chain" id="PRO_0000136912" description="Large ribosomal subunit protein eL24">
    <location>
        <begin position="1"/>
        <end position="58"/>
    </location>
</feature>
<feature type="zinc finger region" description="C4-type" evidence="1">
    <location>
        <begin position="6"/>
        <end position="36"/>
    </location>
</feature>
<feature type="binding site" evidence="1">
    <location>
        <position position="6"/>
    </location>
    <ligand>
        <name>Zn(2+)</name>
        <dbReference type="ChEBI" id="CHEBI:29105"/>
    </ligand>
</feature>
<feature type="binding site" evidence="1">
    <location>
        <position position="9"/>
    </location>
    <ligand>
        <name>Zn(2+)</name>
        <dbReference type="ChEBI" id="CHEBI:29105"/>
    </ligand>
</feature>
<feature type="binding site" evidence="1">
    <location>
        <position position="32"/>
    </location>
    <ligand>
        <name>Zn(2+)</name>
        <dbReference type="ChEBI" id="CHEBI:29105"/>
    </ligand>
</feature>
<feature type="binding site" evidence="1">
    <location>
        <position position="36"/>
    </location>
    <ligand>
        <name>Zn(2+)</name>
        <dbReference type="ChEBI" id="CHEBI:29105"/>
    </ligand>
</feature>
<gene>
    <name evidence="1" type="primary">rpl24e</name>
    <name type="ordered locus">AF_0766</name>
</gene>
<proteinExistence type="inferred from homology"/>
<keyword id="KW-0479">Metal-binding</keyword>
<keyword id="KW-1185">Reference proteome</keyword>
<keyword id="KW-0687">Ribonucleoprotein</keyword>
<keyword id="KW-0689">Ribosomal protein</keyword>
<keyword id="KW-0694">RNA-binding</keyword>
<keyword id="KW-0699">rRNA-binding</keyword>
<keyword id="KW-0862">Zinc</keyword>
<keyword id="KW-0863">Zinc-finger</keyword>
<name>RL24E_ARCFU</name>
<sequence>MEKRVCSFCGYDIEPGTGKMYVRRDGRVFYFCSGKCEKNMLKLKRKPRKLKWTKHYSR</sequence>